<reference key="1">
    <citation type="submission" date="2001-01" db="EMBL/GenBank/DDBJ databases">
        <title>Nucleotide sequence of Dendroaspis natriuretic peptide from first amino acid to 3' polyadenylation tail.</title>
        <authorList>
            <person name="Woodard G.E."/>
            <person name="Brown J."/>
        </authorList>
    </citation>
    <scope>NUCLEOTIDE SEQUENCE [MRNA]</scope>
    <source>
        <tissue>Venom gland</tissue>
    </source>
</reference>
<feature type="peptide" id="PRO_0000403795" description="Natriuretic peptide DNP-2" evidence="1">
    <location>
        <begin position="1"/>
        <end position="38"/>
    </location>
</feature>
<feature type="propeptide" id="PRO_0000403796" evidence="2">
    <location>
        <begin position="39"/>
        <end position="53"/>
    </location>
</feature>
<feature type="disulfide bond" evidence="1">
    <location>
        <begin position="7"/>
        <end position="23"/>
    </location>
</feature>
<protein>
    <recommendedName>
        <fullName>Natriuretic peptide DNP-2</fullName>
    </recommendedName>
</protein>
<proteinExistence type="inferred from homology"/>
<dbReference type="EMBL" id="AF344184">
    <property type="protein sequence ID" value="AAL99383.1"/>
    <property type="molecule type" value="mRNA"/>
</dbReference>
<dbReference type="SMR" id="Q8QGP7"/>
<dbReference type="GO" id="GO:0005576">
    <property type="term" value="C:extracellular region"/>
    <property type="evidence" value="ECO:0007669"/>
    <property type="project" value="UniProtKB-SubCell"/>
</dbReference>
<dbReference type="GO" id="GO:0005179">
    <property type="term" value="F:hormone activity"/>
    <property type="evidence" value="ECO:0007669"/>
    <property type="project" value="InterPro"/>
</dbReference>
<dbReference type="GO" id="GO:0015459">
    <property type="term" value="F:potassium channel regulator activity"/>
    <property type="evidence" value="ECO:0007669"/>
    <property type="project" value="UniProtKB-KW"/>
</dbReference>
<dbReference type="GO" id="GO:0090729">
    <property type="term" value="F:toxin activity"/>
    <property type="evidence" value="ECO:0007669"/>
    <property type="project" value="UniProtKB-KW"/>
</dbReference>
<dbReference type="GO" id="GO:0008217">
    <property type="term" value="P:regulation of blood pressure"/>
    <property type="evidence" value="ECO:0007669"/>
    <property type="project" value="UniProtKB-KW"/>
</dbReference>
<dbReference type="GO" id="GO:0042311">
    <property type="term" value="P:vasodilation"/>
    <property type="evidence" value="ECO:0007669"/>
    <property type="project" value="UniProtKB-KW"/>
</dbReference>
<dbReference type="InterPro" id="IPR000663">
    <property type="entry name" value="Natr_peptide"/>
</dbReference>
<dbReference type="InterPro" id="IPR030480">
    <property type="entry name" value="Natr_peptide_CS"/>
</dbReference>
<dbReference type="Pfam" id="PF00212">
    <property type="entry name" value="ANP"/>
    <property type="match status" value="1"/>
</dbReference>
<dbReference type="PROSITE" id="PS00263">
    <property type="entry name" value="NATRIURETIC_PEPTIDE"/>
    <property type="match status" value="1"/>
</dbReference>
<organism>
    <name type="scientific">Dendroaspis angusticeps</name>
    <name type="common">Eastern green mamba</name>
    <name type="synonym">Naja angusticeps</name>
    <dbReference type="NCBI Taxonomy" id="8618"/>
    <lineage>
        <taxon>Eukaryota</taxon>
        <taxon>Metazoa</taxon>
        <taxon>Chordata</taxon>
        <taxon>Craniata</taxon>
        <taxon>Vertebrata</taxon>
        <taxon>Euteleostomi</taxon>
        <taxon>Lepidosauria</taxon>
        <taxon>Squamata</taxon>
        <taxon>Bifurcata</taxon>
        <taxon>Unidentata</taxon>
        <taxon>Episquamata</taxon>
        <taxon>Toxicofera</taxon>
        <taxon>Serpentes</taxon>
        <taxon>Colubroidea</taxon>
        <taxon>Elapidae</taxon>
        <taxon>Elapinae</taxon>
        <taxon>Dendroaspis</taxon>
    </lineage>
</organism>
<accession>Q8QGP7</accession>
<keyword id="KW-1221">Calcium-activated potassium channel impairing toxin</keyword>
<keyword id="KW-1015">Disulfide bond</keyword>
<keyword id="KW-0382">Hypotensive agent</keyword>
<keyword id="KW-0872">Ion channel impairing toxin</keyword>
<keyword id="KW-0632">Potassium channel impairing toxin</keyword>
<keyword id="KW-0964">Secreted</keyword>
<keyword id="KW-0800">Toxin</keyword>
<keyword id="KW-0838">Vasoactive</keyword>
<keyword id="KW-0840">Vasodilator</keyword>
<name>VNP2_DENAN</name>
<evidence type="ECO:0000250" key="1">
    <source>
        <dbReference type="UniProtKB" id="P28374"/>
    </source>
</evidence>
<evidence type="ECO:0000305" key="2"/>
<evidence type="ECO:0000305" key="3">
    <source ref="1"/>
</evidence>
<comment type="function">
    <text evidence="1">Exhibits vasodilator, natriuretic and diuretic properties in animal models and human tissues. Acts by stimulating cGMP via the natriuretic peptide receptor 1 (NPR1). Is a poor agonist of the atrial natriuretic peptide receptor 2 (NPR2). Is not degraded by neutral endopeptidase (NEP/MME). Binds to atrial natriuretic peptide clearance receptor (NPR-C/NPR3), which may be responsible of the removal of DNP from the circulation. Increases calcium uptake and induces histamine release from rat peritoneal mast cells. Increases calcium-activated potassium (KCa) current in gastric antral circular smooth muscle cells by increasing cGMP production and activating inositol trisphosphate receptors (IP3Rs). In vivo, reduces both systolic and diastolic blood pressure with no effect on heart rate, when intravenously injected in conscious rabbits.</text>
</comment>
<comment type="subcellular location">
    <subcellularLocation>
        <location evidence="3">Secreted</location>
    </subcellularLocation>
</comment>
<comment type="tissue specificity">
    <text evidence="3">Expressed by the venom gland.</text>
</comment>
<comment type="similarity">
    <text evidence="2">Belongs to the natriuretic peptide family.</text>
</comment>
<sequence>EVKYDPCFGHKIDRINHVSNLGCPSLRDPRPTAPAALRIIRDLHPDSKQSQAA</sequence>